<keyword id="KW-1003">Cell membrane</keyword>
<keyword id="KW-0408">Iron</keyword>
<keyword id="KW-0472">Membrane</keyword>
<keyword id="KW-0812">Transmembrane</keyword>
<keyword id="KW-1133">Transmembrane helix</keyword>
<keyword id="KW-0813">Transport</keyword>
<comment type="function">
    <text evidence="1">Part of the binding-protein-dependent transport system for heme-iron. Responsible for the translocation of the substrate across the membrane (By similarity).</text>
</comment>
<comment type="subcellular location">
    <subcellularLocation>
        <location evidence="3">Cell membrane</location>
        <topology evidence="3">Multi-pass membrane protein</topology>
    </subcellularLocation>
</comment>
<comment type="induction">
    <text evidence="1">Repressed by fur in the presence of iron.</text>
</comment>
<comment type="similarity">
    <text evidence="3">Belongs to the binding-protein-dependent transport system permease family. FecCD subfamily.</text>
</comment>
<comment type="sequence caution" evidence="3">
    <conflict type="erroneous initiation">
        <sequence resource="EMBL-CDS" id="BAB57296"/>
    </conflict>
</comment>
<name>ISDF_STAAM</name>
<dbReference type="EMBL" id="BA000017">
    <property type="protein sequence ID" value="BAB57296.1"/>
    <property type="status" value="ALT_INIT"/>
    <property type="molecule type" value="Genomic_DNA"/>
</dbReference>
<dbReference type="SMR" id="Q99UX0"/>
<dbReference type="KEGG" id="sav:SAV1134"/>
<dbReference type="HOGENOM" id="CLU_013016_1_1_9"/>
<dbReference type="Proteomes" id="UP000002481">
    <property type="component" value="Chromosome"/>
</dbReference>
<dbReference type="GO" id="GO:0005886">
    <property type="term" value="C:plasma membrane"/>
    <property type="evidence" value="ECO:0007669"/>
    <property type="project" value="UniProtKB-SubCell"/>
</dbReference>
<dbReference type="GO" id="GO:0022857">
    <property type="term" value="F:transmembrane transporter activity"/>
    <property type="evidence" value="ECO:0007669"/>
    <property type="project" value="InterPro"/>
</dbReference>
<dbReference type="GO" id="GO:0033214">
    <property type="term" value="P:siderophore-dependent iron import into cell"/>
    <property type="evidence" value="ECO:0007669"/>
    <property type="project" value="TreeGrafter"/>
</dbReference>
<dbReference type="CDD" id="cd06550">
    <property type="entry name" value="TM_ABC_iron-siderophores_like"/>
    <property type="match status" value="1"/>
</dbReference>
<dbReference type="FunFam" id="1.10.3470.10:FF:000001">
    <property type="entry name" value="Vitamin B12 ABC transporter permease BtuC"/>
    <property type="match status" value="1"/>
</dbReference>
<dbReference type="Gene3D" id="1.10.3470.10">
    <property type="entry name" value="ABC transporter involved in vitamin B12 uptake, BtuC"/>
    <property type="match status" value="1"/>
</dbReference>
<dbReference type="InterPro" id="IPR037294">
    <property type="entry name" value="ABC_BtuC-like"/>
</dbReference>
<dbReference type="InterPro" id="IPR000522">
    <property type="entry name" value="ABC_transptr_permease_BtuC"/>
</dbReference>
<dbReference type="PANTHER" id="PTHR30472">
    <property type="entry name" value="FERRIC ENTEROBACTIN TRANSPORT SYSTEM PERMEASE PROTEIN"/>
    <property type="match status" value="1"/>
</dbReference>
<dbReference type="PANTHER" id="PTHR30472:SF21">
    <property type="entry name" value="HEME-IRON TRANSPORT SYSTEM PERMEASE PROTEIN ISDF-RELATED"/>
    <property type="match status" value="1"/>
</dbReference>
<dbReference type="Pfam" id="PF01032">
    <property type="entry name" value="FecCD"/>
    <property type="match status" value="1"/>
</dbReference>
<dbReference type="SUPFAM" id="SSF81345">
    <property type="entry name" value="ABC transporter involved in vitamin B12 uptake, BtuC"/>
    <property type="match status" value="1"/>
</dbReference>
<evidence type="ECO:0000250" key="1"/>
<evidence type="ECO:0000255" key="2"/>
<evidence type="ECO:0000305" key="3"/>
<protein>
    <recommendedName>
        <fullName>Probable heme-iron transport system permease protein IsdF</fullName>
    </recommendedName>
    <alternativeName>
        <fullName>Iron-regulated surface determinant protein F</fullName>
    </alternativeName>
    <alternativeName>
        <fullName>Staphylococcal iron-regulated protein G</fullName>
    </alternativeName>
</protein>
<organism>
    <name type="scientific">Staphylococcus aureus (strain Mu50 / ATCC 700699)</name>
    <dbReference type="NCBI Taxonomy" id="158878"/>
    <lineage>
        <taxon>Bacteria</taxon>
        <taxon>Bacillati</taxon>
        <taxon>Bacillota</taxon>
        <taxon>Bacilli</taxon>
        <taxon>Bacillales</taxon>
        <taxon>Staphylococcaceae</taxon>
        <taxon>Staphylococcus</taxon>
    </lineage>
</organism>
<reference key="1">
    <citation type="journal article" date="2001" name="Lancet">
        <title>Whole genome sequencing of meticillin-resistant Staphylococcus aureus.</title>
        <authorList>
            <person name="Kuroda M."/>
            <person name="Ohta T."/>
            <person name="Uchiyama I."/>
            <person name="Baba T."/>
            <person name="Yuzawa H."/>
            <person name="Kobayashi I."/>
            <person name="Cui L."/>
            <person name="Oguchi A."/>
            <person name="Aoki K."/>
            <person name="Nagai Y."/>
            <person name="Lian J.-Q."/>
            <person name="Ito T."/>
            <person name="Kanamori M."/>
            <person name="Matsumaru H."/>
            <person name="Maruyama A."/>
            <person name="Murakami H."/>
            <person name="Hosoyama A."/>
            <person name="Mizutani-Ui Y."/>
            <person name="Takahashi N.K."/>
            <person name="Sawano T."/>
            <person name="Inoue R."/>
            <person name="Kaito C."/>
            <person name="Sekimizu K."/>
            <person name="Hirakawa H."/>
            <person name="Kuhara S."/>
            <person name="Goto S."/>
            <person name="Yabuzaki J."/>
            <person name="Kanehisa M."/>
            <person name="Yamashita A."/>
            <person name="Oshima K."/>
            <person name="Furuya K."/>
            <person name="Yoshino C."/>
            <person name="Shiba T."/>
            <person name="Hattori M."/>
            <person name="Ogasawara N."/>
            <person name="Hayashi H."/>
            <person name="Hiramatsu K."/>
        </authorList>
    </citation>
    <scope>NUCLEOTIDE SEQUENCE [LARGE SCALE GENOMIC DNA]</scope>
    <source>
        <strain>Mu50 / ATCC 700699</strain>
    </source>
</reference>
<gene>
    <name type="primary">isdF</name>
    <name type="synonym">sirG</name>
    <name type="ordered locus">SAV1134</name>
</gene>
<feature type="chain" id="PRO_0000372464" description="Probable heme-iron transport system permease protein IsdF">
    <location>
        <begin position="1"/>
        <end position="322"/>
    </location>
</feature>
<feature type="transmembrane region" description="Helical" evidence="2">
    <location>
        <begin position="9"/>
        <end position="29"/>
    </location>
</feature>
<feature type="transmembrane region" description="Helical" evidence="2">
    <location>
        <begin position="61"/>
        <end position="81"/>
    </location>
</feature>
<feature type="transmembrane region" description="Helical" evidence="2">
    <location>
        <begin position="89"/>
        <end position="109"/>
    </location>
</feature>
<feature type="transmembrane region" description="Helical" evidence="2">
    <location>
        <begin position="114"/>
        <end position="134"/>
    </location>
</feature>
<feature type="transmembrane region" description="Helical" evidence="2">
    <location>
        <begin position="143"/>
        <end position="163"/>
    </location>
</feature>
<feature type="transmembrane region" description="Helical" evidence="2">
    <location>
        <begin position="179"/>
        <end position="199"/>
    </location>
</feature>
<feature type="transmembrane region" description="Helical" evidence="2">
    <location>
        <begin position="233"/>
        <end position="253"/>
    </location>
</feature>
<feature type="transmembrane region" description="Helical" evidence="2">
    <location>
        <begin position="267"/>
        <end position="287"/>
    </location>
</feature>
<feature type="transmembrane region" description="Helical" evidence="2">
    <location>
        <begin position="294"/>
        <end position="314"/>
    </location>
</feature>
<proteinExistence type="inferred from homology"/>
<sequence length="322" mass="35175">MMIKNKKKLLFLCLLVILIATAYISFVTGTIKLSFNDLFTKFTTGSNEAVDSIIDLRLPRILIALMVGAMLAVSGALLQAALQNPLAEANIIGVSSGALIMRALCMLFIPQLYFYLPLLSFIGGLIPFLIIILLHSKFRFNAVSMILVGVALFVLLNGVLEILTQNPLMKIPQGLTMKIWSDVYILAVSALLGLILTLLLSPKLNLLNLDDIQARSIGFNIDRYRWLTGLLAVFLASATVAIVGQLAFLGIIVPHVVRKLVGGNYRVLIPFSTVIGAWLLLVADLLGRVIQPPLEIPANAILMIVGGPMLIYLICQSQRNRI</sequence>
<accession>Q99UX0</accession>